<reference key="1">
    <citation type="journal article" date="2008" name="BMC Genomics">
        <title>The genome of Aeromonas salmonicida subsp. salmonicida A449: insights into the evolution of a fish pathogen.</title>
        <authorList>
            <person name="Reith M.E."/>
            <person name="Singh R.K."/>
            <person name="Curtis B."/>
            <person name="Boyd J.M."/>
            <person name="Bouevitch A."/>
            <person name="Kimball J."/>
            <person name="Munholland J."/>
            <person name="Murphy C."/>
            <person name="Sarty D."/>
            <person name="Williams J."/>
            <person name="Nash J.H."/>
            <person name="Johnson S.C."/>
            <person name="Brown L.L."/>
        </authorList>
    </citation>
    <scope>NUCLEOTIDE SEQUENCE [LARGE SCALE GENOMIC DNA]</scope>
    <source>
        <strain>A449</strain>
    </source>
</reference>
<gene>
    <name evidence="1" type="primary">rplQ</name>
    <name type="ordered locus">ASA_4061</name>
</gene>
<organism>
    <name type="scientific">Aeromonas salmonicida (strain A449)</name>
    <dbReference type="NCBI Taxonomy" id="382245"/>
    <lineage>
        <taxon>Bacteria</taxon>
        <taxon>Pseudomonadati</taxon>
        <taxon>Pseudomonadota</taxon>
        <taxon>Gammaproteobacteria</taxon>
        <taxon>Aeromonadales</taxon>
        <taxon>Aeromonadaceae</taxon>
        <taxon>Aeromonas</taxon>
    </lineage>
</organism>
<feature type="chain" id="PRO_1000055761" description="Large ribosomal subunit protein bL17">
    <location>
        <begin position="1"/>
        <end position="127"/>
    </location>
</feature>
<keyword id="KW-0687">Ribonucleoprotein</keyword>
<keyword id="KW-0689">Ribosomal protein</keyword>
<sequence>MRHRLSGRQLNRNSSHRQAMFRNMASSLVRHEIIKTTLPKAKELRRVVEPLITLAKTDSVANRRLAFARTRDNAIVAKLFNELGPRYLERAGGYTRILKCGFRAGDNAPMAYIELVDRPAAAEAAAE</sequence>
<protein>
    <recommendedName>
        <fullName evidence="1">Large ribosomal subunit protein bL17</fullName>
    </recommendedName>
    <alternativeName>
        <fullName evidence="2">50S ribosomal protein L17</fullName>
    </alternativeName>
</protein>
<accession>A4SSY0</accession>
<evidence type="ECO:0000255" key="1">
    <source>
        <dbReference type="HAMAP-Rule" id="MF_01368"/>
    </source>
</evidence>
<evidence type="ECO:0000305" key="2"/>
<name>RL17_AERS4</name>
<comment type="subunit">
    <text evidence="1">Part of the 50S ribosomal subunit. Contacts protein L32.</text>
</comment>
<comment type="similarity">
    <text evidence="1">Belongs to the bacterial ribosomal protein bL17 family.</text>
</comment>
<proteinExistence type="inferred from homology"/>
<dbReference type="EMBL" id="CP000644">
    <property type="protein sequence ID" value="ABO92002.1"/>
    <property type="molecule type" value="Genomic_DNA"/>
</dbReference>
<dbReference type="RefSeq" id="WP_005307999.1">
    <property type="nucleotide sequence ID" value="NC_009348.1"/>
</dbReference>
<dbReference type="SMR" id="A4SSY0"/>
<dbReference type="STRING" id="29491.GCA_000820065_03490"/>
<dbReference type="GeneID" id="97858418"/>
<dbReference type="KEGG" id="asa:ASA_4061"/>
<dbReference type="eggNOG" id="COG0203">
    <property type="taxonomic scope" value="Bacteria"/>
</dbReference>
<dbReference type="HOGENOM" id="CLU_074407_2_0_6"/>
<dbReference type="Proteomes" id="UP000000225">
    <property type="component" value="Chromosome"/>
</dbReference>
<dbReference type="GO" id="GO:0022625">
    <property type="term" value="C:cytosolic large ribosomal subunit"/>
    <property type="evidence" value="ECO:0007669"/>
    <property type="project" value="TreeGrafter"/>
</dbReference>
<dbReference type="GO" id="GO:0003735">
    <property type="term" value="F:structural constituent of ribosome"/>
    <property type="evidence" value="ECO:0007669"/>
    <property type="project" value="InterPro"/>
</dbReference>
<dbReference type="GO" id="GO:0006412">
    <property type="term" value="P:translation"/>
    <property type="evidence" value="ECO:0007669"/>
    <property type="project" value="UniProtKB-UniRule"/>
</dbReference>
<dbReference type="FunFam" id="3.90.1030.10:FF:000001">
    <property type="entry name" value="50S ribosomal protein L17"/>
    <property type="match status" value="1"/>
</dbReference>
<dbReference type="Gene3D" id="3.90.1030.10">
    <property type="entry name" value="Ribosomal protein L17"/>
    <property type="match status" value="1"/>
</dbReference>
<dbReference type="HAMAP" id="MF_01368">
    <property type="entry name" value="Ribosomal_bL17"/>
    <property type="match status" value="1"/>
</dbReference>
<dbReference type="InterPro" id="IPR000456">
    <property type="entry name" value="Ribosomal_bL17"/>
</dbReference>
<dbReference type="InterPro" id="IPR047859">
    <property type="entry name" value="Ribosomal_bL17_CS"/>
</dbReference>
<dbReference type="InterPro" id="IPR036373">
    <property type="entry name" value="Ribosomal_bL17_sf"/>
</dbReference>
<dbReference type="NCBIfam" id="TIGR00059">
    <property type="entry name" value="L17"/>
    <property type="match status" value="1"/>
</dbReference>
<dbReference type="PANTHER" id="PTHR14413:SF16">
    <property type="entry name" value="LARGE RIBOSOMAL SUBUNIT PROTEIN BL17M"/>
    <property type="match status" value="1"/>
</dbReference>
<dbReference type="PANTHER" id="PTHR14413">
    <property type="entry name" value="RIBOSOMAL PROTEIN L17"/>
    <property type="match status" value="1"/>
</dbReference>
<dbReference type="Pfam" id="PF01196">
    <property type="entry name" value="Ribosomal_L17"/>
    <property type="match status" value="1"/>
</dbReference>
<dbReference type="SUPFAM" id="SSF64263">
    <property type="entry name" value="Prokaryotic ribosomal protein L17"/>
    <property type="match status" value="1"/>
</dbReference>
<dbReference type="PROSITE" id="PS01167">
    <property type="entry name" value="RIBOSOMAL_L17"/>
    <property type="match status" value="1"/>
</dbReference>